<organism>
    <name type="scientific">Homo sapiens</name>
    <name type="common">Human</name>
    <dbReference type="NCBI Taxonomy" id="9606"/>
    <lineage>
        <taxon>Eukaryota</taxon>
        <taxon>Metazoa</taxon>
        <taxon>Chordata</taxon>
        <taxon>Craniata</taxon>
        <taxon>Vertebrata</taxon>
        <taxon>Euteleostomi</taxon>
        <taxon>Mammalia</taxon>
        <taxon>Eutheria</taxon>
        <taxon>Euarchontoglires</taxon>
        <taxon>Primates</taxon>
        <taxon>Haplorrhini</taxon>
        <taxon>Catarrhini</taxon>
        <taxon>Hominidae</taxon>
        <taxon>Homo</taxon>
    </lineage>
</organism>
<comment type="function">
    <text evidence="1">Protein tyrosine phosphatase that negatively regulates oligodendrocyte precursor proliferation in the embryonic spinal cord. Required for normal differentiation of the precursor cells into mature, fully myelinating oligodendrocytes. May play a role in protecting oligondendrocytes against apoptosis. May play a role in the establishment of contextual memory, probably via the dephosphorylation of proteins that are part of important signaling cascades (By similarity).</text>
</comment>
<comment type="catalytic activity">
    <reaction evidence="8">
        <text>O-phospho-L-tyrosyl-[protein] + H2O = L-tyrosyl-[protein] + phosphate</text>
        <dbReference type="Rhea" id="RHEA:10684"/>
        <dbReference type="Rhea" id="RHEA-COMP:10136"/>
        <dbReference type="Rhea" id="RHEA-COMP:20101"/>
        <dbReference type="ChEBI" id="CHEBI:15377"/>
        <dbReference type="ChEBI" id="CHEBI:43474"/>
        <dbReference type="ChEBI" id="CHEBI:46858"/>
        <dbReference type="ChEBI" id="CHEBI:61978"/>
        <dbReference type="EC" id="3.1.3.48"/>
    </reaction>
</comment>
<comment type="subunit">
    <text evidence="3 13 14">The carbonic-anhydrase like domain interacts with CNTN1 (contactin) (PubMed:20133774). Interacts with PTN (PubMed:16814777). Interaction with PTN promotes formation of homooligomers; oligomerization impairs phosphatase activity (By similarity). Interacts (via chondroitin sulfate chains) with MDK (via C-terminal); this interaction is inhibited by PTN; this interaction promotes neuronal migration (By similarity).</text>
</comment>
<comment type="interaction">
    <interactant intactId="EBI-2263175">
        <id>P23471</id>
    </interactant>
    <interactant intactId="EBI-357361">
        <id>Q9UM73</id>
        <label>ALK</label>
    </interactant>
    <organismsDiffer>false</organismsDiffer>
    <experiments>2</experiments>
</comment>
<comment type="interaction">
    <interactant intactId="EBI-2263175">
        <id>P23471</id>
    </interactant>
    <interactant intactId="EBI-5564336">
        <id>Q12860</id>
        <label>CNTN1</label>
    </interactant>
    <organismsDiffer>false</organismsDiffer>
    <experiments>3</experiments>
</comment>
<comment type="subcellular location">
    <molecule>Isoform 1</molecule>
    <subcellularLocation>
        <location>Cell membrane</location>
        <topology>Single-pass type I membrane protein</topology>
    </subcellularLocation>
    <subcellularLocation>
        <location evidence="1">Secreted</location>
    </subcellularLocation>
    <text evidence="1">A secreted form is apparently generated by shedding of the extracellular domain.</text>
</comment>
<comment type="subcellular location">
    <molecule>Isoform 2</molecule>
    <subcellularLocation>
        <location evidence="18">Secreted</location>
    </subcellularLocation>
</comment>
<comment type="alternative products">
    <event type="alternative splicing"/>
    <isoform>
        <id>P23471-1</id>
        <name>1</name>
        <sequence type="displayed"/>
    </isoform>
    <isoform>
        <id>P23471-2</id>
        <name>2</name>
        <sequence type="described" ref="VSP_054062"/>
    </isoform>
    <isoform>
        <id>P23471-3</id>
        <name>3</name>
        <sequence type="described" ref="VSP_054061 VSP_054062"/>
    </isoform>
</comment>
<comment type="tissue specificity">
    <text evidence="15">Specifically expressed in the central nervous system, where it is localized in the Purkinje cell layer of the cerebellum, the dentate gyrus, and the subependymal layer of the anterior horn of the lateral ventricle. Developmentally regulated in the brain.</text>
</comment>
<comment type="similarity">
    <text evidence="18">Belongs to the protein-tyrosine phosphatase family. Receptor class 5 subfamily.</text>
</comment>
<comment type="caution">
    <text evidence="18">Was termed (PubMed:8387522, PubMed:2170109) RPTPase beta.</text>
</comment>
<comment type="caution">
    <text evidence="18">The human genome was initially thought to contain 2 genes for PTPRZ: PTPRZ1 (on chr 7) and PTPRZ2 (on chr 1). However, PTPRZ2 probably does not exist and corresponds to PTPRZ1.</text>
</comment>
<comment type="sequence caution" evidence="18">
    <conflict type="miscellaneous discrepancy">
        <sequence resource="EMBL-CDS" id="AAC39934"/>
    </conflict>
    <text>Contaminating sequence. The N-terminus may be contaminated with vector sequence.</text>
</comment>
<dbReference type="EC" id="3.1.3.48" evidence="3"/>
<dbReference type="EMBL" id="M93426">
    <property type="protein sequence ID" value="AAA60225.1"/>
    <property type="molecule type" value="mRNA"/>
</dbReference>
<dbReference type="EMBL" id="AC006020">
    <property type="protein sequence ID" value="AAF03527.1"/>
    <property type="molecule type" value="Genomic_DNA"/>
</dbReference>
<dbReference type="EMBL" id="AC006353">
    <property type="status" value="NOT_ANNOTATED_CDS"/>
    <property type="molecule type" value="Genomic_DNA"/>
</dbReference>
<dbReference type="EMBL" id="AC073095">
    <property type="status" value="NOT_ANNOTATED_CDS"/>
    <property type="molecule type" value="Genomic_DNA"/>
</dbReference>
<dbReference type="EMBL" id="CH236947">
    <property type="protein sequence ID" value="EAL24344.1"/>
    <property type="molecule type" value="Genomic_DNA"/>
</dbReference>
<dbReference type="EMBL" id="CH471070">
    <property type="protein sequence ID" value="EAW83561.1"/>
    <property type="molecule type" value="Genomic_DNA"/>
</dbReference>
<dbReference type="EMBL" id="U88967">
    <property type="protein sequence ID" value="AAC39934.1"/>
    <property type="status" value="ALT_SEQ"/>
    <property type="molecule type" value="mRNA"/>
</dbReference>
<dbReference type="EMBL" id="X54135">
    <property type="protein sequence ID" value="CAA38070.1"/>
    <property type="molecule type" value="mRNA"/>
</dbReference>
<dbReference type="CCDS" id="CCDS34740.1">
    <molecule id="P23471-1"/>
</dbReference>
<dbReference type="CCDS" id="CCDS56505.1">
    <molecule id="P23471-3"/>
</dbReference>
<dbReference type="CCDS" id="CCDS94187.1">
    <molecule id="P23471-2"/>
</dbReference>
<dbReference type="PIR" id="A46151">
    <property type="entry name" value="A46151"/>
</dbReference>
<dbReference type="RefSeq" id="NP_001193767.1">
    <property type="nucleotide sequence ID" value="NM_001206838.1"/>
</dbReference>
<dbReference type="RefSeq" id="NP_001193768.1">
    <molecule id="P23471-3"/>
    <property type="nucleotide sequence ID" value="NM_001206839.2"/>
</dbReference>
<dbReference type="RefSeq" id="NP_001356324.1">
    <molecule id="P23471-2"/>
    <property type="nucleotide sequence ID" value="NM_001369395.1"/>
</dbReference>
<dbReference type="RefSeq" id="NP_002842.2">
    <molecule id="P23471-1"/>
    <property type="nucleotide sequence ID" value="NM_002851.3"/>
</dbReference>
<dbReference type="RefSeq" id="XP_005250576.1">
    <property type="nucleotide sequence ID" value="XM_005250519.1"/>
</dbReference>
<dbReference type="PDB" id="3JXF">
    <property type="method" value="X-ray"/>
    <property type="resolution" value="2.00 A"/>
    <property type="chains" value="A/B=34-302"/>
</dbReference>
<dbReference type="PDB" id="3S97">
    <property type="method" value="X-ray"/>
    <property type="resolution" value="2.30 A"/>
    <property type="chains" value="A/B=34-302"/>
</dbReference>
<dbReference type="PDB" id="5AWX">
    <property type="method" value="X-ray"/>
    <property type="resolution" value="1.86 A"/>
    <property type="chains" value="A=1698-2000"/>
</dbReference>
<dbReference type="PDB" id="5H08">
    <property type="method" value="X-ray"/>
    <property type="resolution" value="2.53 A"/>
    <property type="chains" value="A=1698-2000"/>
</dbReference>
<dbReference type="PDB" id="8FN8">
    <property type="method" value="X-ray"/>
    <property type="resolution" value="1.89 A"/>
    <property type="chains" value="B=310-411"/>
</dbReference>
<dbReference type="PDB" id="8FN9">
    <property type="method" value="X-ray"/>
    <property type="resolution" value="1.80 A"/>
    <property type="chains" value="B/D/F/H=310-411"/>
</dbReference>
<dbReference type="PDBsum" id="3JXF"/>
<dbReference type="PDBsum" id="3S97"/>
<dbReference type="PDBsum" id="5AWX"/>
<dbReference type="PDBsum" id="5H08"/>
<dbReference type="PDBsum" id="8FN8"/>
<dbReference type="PDBsum" id="8FN9"/>
<dbReference type="SMR" id="P23471"/>
<dbReference type="BioGRID" id="111767">
    <property type="interactions" value="33"/>
</dbReference>
<dbReference type="DIP" id="DIP-42063N"/>
<dbReference type="FunCoup" id="P23471">
    <property type="interactions" value="822"/>
</dbReference>
<dbReference type="IntAct" id="P23471">
    <property type="interactions" value="19"/>
</dbReference>
<dbReference type="MINT" id="P23471"/>
<dbReference type="STRING" id="9606.ENSP00000377047"/>
<dbReference type="BindingDB" id="P23471"/>
<dbReference type="ChEMBL" id="CHEMBL4295730"/>
<dbReference type="DEPOD" id="PTPRZ1"/>
<dbReference type="GlyConnect" id="2068">
    <property type="glycosylation" value="2 N-Linked glycans (1 site)"/>
</dbReference>
<dbReference type="GlyCosmos" id="P23471">
    <property type="glycosylation" value="25 sites, 5 glycans"/>
</dbReference>
<dbReference type="GlyGen" id="P23471">
    <property type="glycosylation" value="45 sites, 5 N-linked glycans (2 sites), 2 O-linked glycans (20 sites)"/>
</dbReference>
<dbReference type="iPTMnet" id="P23471"/>
<dbReference type="PhosphoSitePlus" id="P23471"/>
<dbReference type="SwissPalm" id="P23471"/>
<dbReference type="BioMuta" id="PTPRZ1"/>
<dbReference type="DMDM" id="229485537"/>
<dbReference type="jPOST" id="P23471"/>
<dbReference type="MassIVE" id="P23471"/>
<dbReference type="PaxDb" id="9606-ENSP00000377047"/>
<dbReference type="PeptideAtlas" id="P23471"/>
<dbReference type="ProteomicsDB" id="10007"/>
<dbReference type="ProteomicsDB" id="54112">
    <molecule id="P23471-1"/>
</dbReference>
<dbReference type="ProteomicsDB" id="54113">
    <molecule id="P23471-2"/>
</dbReference>
<dbReference type="Pumba" id="P23471"/>
<dbReference type="ABCD" id="P23471">
    <property type="antibodies" value="7 sequenced antibodies"/>
</dbReference>
<dbReference type="Antibodypedia" id="2175">
    <property type="antibodies" value="201 antibodies from 26 providers"/>
</dbReference>
<dbReference type="DNASU" id="5803"/>
<dbReference type="Ensembl" id="ENST00000393386.7">
    <molecule id="P23471-1"/>
    <property type="protein sequence ID" value="ENSP00000377047.2"/>
    <property type="gene ID" value="ENSG00000106278.12"/>
</dbReference>
<dbReference type="Ensembl" id="ENST00000449182.1">
    <molecule id="P23471-3"/>
    <property type="protein sequence ID" value="ENSP00000410000.1"/>
    <property type="gene ID" value="ENSG00000106278.12"/>
</dbReference>
<dbReference type="Ensembl" id="ENST00000652298.1">
    <molecule id="P23471-2"/>
    <property type="protein sequence ID" value="ENSP00000499137.1"/>
    <property type="gene ID" value="ENSG00000106278.12"/>
</dbReference>
<dbReference type="GeneID" id="5803"/>
<dbReference type="KEGG" id="hsa:5803"/>
<dbReference type="MANE-Select" id="ENST00000393386.7">
    <property type="protein sequence ID" value="ENSP00000377047.2"/>
    <property type="RefSeq nucleotide sequence ID" value="NM_002851.3"/>
    <property type="RefSeq protein sequence ID" value="NP_002842.2"/>
</dbReference>
<dbReference type="UCSC" id="uc003vjy.4">
    <molecule id="P23471-1"/>
    <property type="organism name" value="human"/>
</dbReference>
<dbReference type="AGR" id="HGNC:9685"/>
<dbReference type="CTD" id="5803"/>
<dbReference type="DisGeNET" id="5803"/>
<dbReference type="GeneCards" id="PTPRZ1"/>
<dbReference type="HGNC" id="HGNC:9685">
    <property type="gene designation" value="PTPRZ1"/>
</dbReference>
<dbReference type="HPA" id="ENSG00000106278">
    <property type="expression patterns" value="Tissue enriched (brain)"/>
</dbReference>
<dbReference type="MalaCards" id="PTPRZ1"/>
<dbReference type="MIM" id="176891">
    <property type="type" value="gene"/>
</dbReference>
<dbReference type="MIM" id="604008">
    <property type="type" value="gene"/>
</dbReference>
<dbReference type="neXtProt" id="NX_P23471"/>
<dbReference type="OpenTargets" id="ENSG00000106278"/>
<dbReference type="PharmGKB" id="PA34029"/>
<dbReference type="VEuPathDB" id="HostDB:ENSG00000106278"/>
<dbReference type="eggNOG" id="KOG0789">
    <property type="taxonomic scope" value="Eukaryota"/>
</dbReference>
<dbReference type="GeneTree" id="ENSGT00940000155529"/>
<dbReference type="HOGENOM" id="CLU_001120_1_0_1"/>
<dbReference type="InParanoid" id="P23471"/>
<dbReference type="OMA" id="NISHGYI"/>
<dbReference type="OrthoDB" id="6022401at2759"/>
<dbReference type="PAN-GO" id="P23471">
    <property type="GO annotations" value="2 GO annotations based on evolutionary models"/>
</dbReference>
<dbReference type="PhylomeDB" id="P23471"/>
<dbReference type="TreeFam" id="TF351978"/>
<dbReference type="BRENDA" id="3.1.3.48">
    <property type="organism ID" value="2681"/>
</dbReference>
<dbReference type="PathwayCommons" id="P23471"/>
<dbReference type="Reactome" id="R-HSA-449836">
    <property type="pathway name" value="Other interleukin signaling"/>
</dbReference>
<dbReference type="Reactome" id="R-HSA-9851151">
    <property type="pathway name" value="MDK and PTN in ALK signaling"/>
</dbReference>
<dbReference type="SignaLink" id="P23471"/>
<dbReference type="SIGNOR" id="P23471"/>
<dbReference type="BioGRID-ORCS" id="5803">
    <property type="hits" value="13 hits in 1164 CRISPR screens"/>
</dbReference>
<dbReference type="CD-CODE" id="FB4E32DD">
    <property type="entry name" value="Presynaptic clusters and postsynaptic densities"/>
</dbReference>
<dbReference type="ChiTaRS" id="PTPRZ1">
    <property type="organism name" value="human"/>
</dbReference>
<dbReference type="EvolutionaryTrace" id="P23471"/>
<dbReference type="GeneWiki" id="PTPRZ1"/>
<dbReference type="GenomeRNAi" id="5803"/>
<dbReference type="Pharos" id="P23471">
    <property type="development level" value="Tchem"/>
</dbReference>
<dbReference type="PRO" id="PR:P23471"/>
<dbReference type="Proteomes" id="UP000005640">
    <property type="component" value="Chromosome 7"/>
</dbReference>
<dbReference type="RNAct" id="P23471">
    <property type="molecule type" value="protein"/>
</dbReference>
<dbReference type="Bgee" id="ENSG00000106278">
    <property type="expression patterns" value="Expressed in ventricular zone and 172 other cell types or tissues"/>
</dbReference>
<dbReference type="ExpressionAtlas" id="P23471">
    <property type="expression patterns" value="baseline and differential"/>
</dbReference>
<dbReference type="GO" id="GO:0005576">
    <property type="term" value="C:extracellular region"/>
    <property type="evidence" value="ECO:0007669"/>
    <property type="project" value="UniProtKB-SubCell"/>
</dbReference>
<dbReference type="GO" id="GO:0072534">
    <property type="term" value="C:perineuronal net"/>
    <property type="evidence" value="ECO:0007669"/>
    <property type="project" value="Ensembl"/>
</dbReference>
<dbReference type="GO" id="GO:0005886">
    <property type="term" value="C:plasma membrane"/>
    <property type="evidence" value="ECO:0000314"/>
    <property type="project" value="UniProtKB"/>
</dbReference>
<dbReference type="GO" id="GO:0045202">
    <property type="term" value="C:synapse"/>
    <property type="evidence" value="ECO:0007669"/>
    <property type="project" value="Ensembl"/>
</dbReference>
<dbReference type="GO" id="GO:0005178">
    <property type="term" value="F:integrin binding"/>
    <property type="evidence" value="ECO:0000314"/>
    <property type="project" value="UniProtKB"/>
</dbReference>
<dbReference type="GO" id="GO:0004725">
    <property type="term" value="F:protein tyrosine phosphatase activity"/>
    <property type="evidence" value="ECO:0000314"/>
    <property type="project" value="UniProtKB"/>
</dbReference>
<dbReference type="GO" id="GO:0005001">
    <property type="term" value="F:transmembrane receptor protein tyrosine phosphatase activity"/>
    <property type="evidence" value="ECO:0000304"/>
    <property type="project" value="ProtInc"/>
</dbReference>
<dbReference type="GO" id="GO:0007409">
    <property type="term" value="P:axonogenesis"/>
    <property type="evidence" value="ECO:0007669"/>
    <property type="project" value="Ensembl"/>
</dbReference>
<dbReference type="GO" id="GO:0007417">
    <property type="term" value="P:central nervous system development"/>
    <property type="evidence" value="ECO:0000304"/>
    <property type="project" value="ProtInc"/>
</dbReference>
<dbReference type="GO" id="GO:0002244">
    <property type="term" value="P:hematopoietic progenitor cell differentiation"/>
    <property type="evidence" value="ECO:0007669"/>
    <property type="project" value="Ensembl"/>
</dbReference>
<dbReference type="GO" id="GO:0007611">
    <property type="term" value="P:learning or memory"/>
    <property type="evidence" value="ECO:0000250"/>
    <property type="project" value="UniProtKB"/>
</dbReference>
<dbReference type="GO" id="GO:0043524">
    <property type="term" value="P:negative regulation of neuron apoptotic process"/>
    <property type="evidence" value="ECO:0000250"/>
    <property type="project" value="UniProtKB"/>
</dbReference>
<dbReference type="GO" id="GO:0031175">
    <property type="term" value="P:neuron projection development"/>
    <property type="evidence" value="ECO:0000318"/>
    <property type="project" value="GO_Central"/>
</dbReference>
<dbReference type="GO" id="GO:0048709">
    <property type="term" value="P:oligodendrocyte differentiation"/>
    <property type="evidence" value="ECO:0000250"/>
    <property type="project" value="UniProtKB"/>
</dbReference>
<dbReference type="GO" id="GO:0035335">
    <property type="term" value="P:peptidyl-tyrosine dephosphorylation"/>
    <property type="evidence" value="ECO:0000250"/>
    <property type="project" value="UniProtKB"/>
</dbReference>
<dbReference type="GO" id="GO:0048714">
    <property type="term" value="P:positive regulation of oligodendrocyte differentiation"/>
    <property type="evidence" value="ECO:0000250"/>
    <property type="project" value="UniProtKB"/>
</dbReference>
<dbReference type="GO" id="GO:0006470">
    <property type="term" value="P:protein dephosphorylation"/>
    <property type="evidence" value="ECO:0000304"/>
    <property type="project" value="ProtInc"/>
</dbReference>
<dbReference type="GO" id="GO:0031641">
    <property type="term" value="P:regulation of myelination"/>
    <property type="evidence" value="ECO:0000250"/>
    <property type="project" value="UniProtKB"/>
</dbReference>
<dbReference type="GO" id="GO:0070445">
    <property type="term" value="P:regulation of oligodendrocyte progenitor proliferation"/>
    <property type="evidence" value="ECO:0000250"/>
    <property type="project" value="UniProtKB"/>
</dbReference>
<dbReference type="GO" id="GO:0007165">
    <property type="term" value="P:signal transduction"/>
    <property type="evidence" value="ECO:0000318"/>
    <property type="project" value="GO_Central"/>
</dbReference>
<dbReference type="CDD" id="cd03122">
    <property type="entry name" value="alpha_CARP_receptor_like"/>
    <property type="match status" value="1"/>
</dbReference>
<dbReference type="CDD" id="cd00063">
    <property type="entry name" value="FN3"/>
    <property type="match status" value="1"/>
</dbReference>
<dbReference type="CDD" id="cd17669">
    <property type="entry name" value="R-PTP-Z-2"/>
    <property type="match status" value="1"/>
</dbReference>
<dbReference type="FunFam" id="3.90.190.10:FF:000016">
    <property type="entry name" value="receptor-type tyrosine-protein phosphatase gamma isoform X1"/>
    <property type="match status" value="1"/>
</dbReference>
<dbReference type="FunFam" id="2.60.40.10:FF:000313">
    <property type="entry name" value="Receptor-type tyrosine-protein phosphatase zeta"/>
    <property type="match status" value="1"/>
</dbReference>
<dbReference type="FunFam" id="3.10.200.10:FF:000004">
    <property type="entry name" value="receptor-type tyrosine-protein phosphatase zeta isoform X1"/>
    <property type="match status" value="1"/>
</dbReference>
<dbReference type="FunFam" id="3.90.190.10:FF:000013">
    <property type="entry name" value="receptor-type tyrosine-protein phosphatase zeta isoform X1"/>
    <property type="match status" value="1"/>
</dbReference>
<dbReference type="Gene3D" id="3.10.200.10">
    <property type="entry name" value="Alpha carbonic anhydrase"/>
    <property type="match status" value="1"/>
</dbReference>
<dbReference type="Gene3D" id="2.60.40.10">
    <property type="entry name" value="Immunoglobulins"/>
    <property type="match status" value="1"/>
</dbReference>
<dbReference type="Gene3D" id="3.90.190.10">
    <property type="entry name" value="Protein tyrosine phosphatase superfamily"/>
    <property type="match status" value="2"/>
</dbReference>
<dbReference type="InterPro" id="IPR041887">
    <property type="entry name" value="Alpha_CARP_receptor-type"/>
</dbReference>
<dbReference type="InterPro" id="IPR001148">
    <property type="entry name" value="CA_dom"/>
</dbReference>
<dbReference type="InterPro" id="IPR036398">
    <property type="entry name" value="CA_dom_sf"/>
</dbReference>
<dbReference type="InterPro" id="IPR003961">
    <property type="entry name" value="FN3_dom"/>
</dbReference>
<dbReference type="InterPro" id="IPR036116">
    <property type="entry name" value="FN3_sf"/>
</dbReference>
<dbReference type="InterPro" id="IPR013783">
    <property type="entry name" value="Ig-like_fold"/>
</dbReference>
<dbReference type="InterPro" id="IPR029021">
    <property type="entry name" value="Prot-tyrosine_phosphatase-like"/>
</dbReference>
<dbReference type="InterPro" id="IPR050348">
    <property type="entry name" value="Protein-Tyr_Phosphatase"/>
</dbReference>
<dbReference type="InterPro" id="IPR000242">
    <property type="entry name" value="PTP_cat"/>
</dbReference>
<dbReference type="InterPro" id="IPR016130">
    <property type="entry name" value="Tyr_Pase_AS"/>
</dbReference>
<dbReference type="InterPro" id="IPR003595">
    <property type="entry name" value="Tyr_Pase_cat"/>
</dbReference>
<dbReference type="InterPro" id="IPR000387">
    <property type="entry name" value="Tyr_Pase_dom"/>
</dbReference>
<dbReference type="PANTHER" id="PTHR19134">
    <property type="entry name" value="RECEPTOR-TYPE TYROSINE-PROTEIN PHOSPHATASE"/>
    <property type="match status" value="1"/>
</dbReference>
<dbReference type="PANTHER" id="PTHR19134:SF461">
    <property type="entry name" value="RECEPTOR-TYPE TYROSINE-PROTEIN PHOSPHATASE ZETA"/>
    <property type="match status" value="1"/>
</dbReference>
<dbReference type="Pfam" id="PF00194">
    <property type="entry name" value="Carb_anhydrase"/>
    <property type="match status" value="1"/>
</dbReference>
<dbReference type="Pfam" id="PF00041">
    <property type="entry name" value="fn3"/>
    <property type="match status" value="1"/>
</dbReference>
<dbReference type="Pfam" id="PF00102">
    <property type="entry name" value="Y_phosphatase"/>
    <property type="match status" value="2"/>
</dbReference>
<dbReference type="PRINTS" id="PR00700">
    <property type="entry name" value="PRTYPHPHTASE"/>
</dbReference>
<dbReference type="SMART" id="SM01057">
    <property type="entry name" value="Carb_anhydrase"/>
    <property type="match status" value="1"/>
</dbReference>
<dbReference type="SMART" id="SM00060">
    <property type="entry name" value="FN3"/>
    <property type="match status" value="1"/>
</dbReference>
<dbReference type="SMART" id="SM00194">
    <property type="entry name" value="PTPc"/>
    <property type="match status" value="2"/>
</dbReference>
<dbReference type="SMART" id="SM00404">
    <property type="entry name" value="PTPc_motif"/>
    <property type="match status" value="2"/>
</dbReference>
<dbReference type="SUPFAM" id="SSF52799">
    <property type="entry name" value="(Phosphotyrosine protein) phosphatases II"/>
    <property type="match status" value="2"/>
</dbReference>
<dbReference type="SUPFAM" id="SSF51069">
    <property type="entry name" value="Carbonic anhydrase"/>
    <property type="match status" value="1"/>
</dbReference>
<dbReference type="SUPFAM" id="SSF49265">
    <property type="entry name" value="Fibronectin type III"/>
    <property type="match status" value="1"/>
</dbReference>
<dbReference type="PROSITE" id="PS51144">
    <property type="entry name" value="ALPHA_CA_2"/>
    <property type="match status" value="1"/>
</dbReference>
<dbReference type="PROSITE" id="PS50853">
    <property type="entry name" value="FN3"/>
    <property type="match status" value="1"/>
</dbReference>
<dbReference type="PROSITE" id="PS00383">
    <property type="entry name" value="TYR_PHOSPHATASE_1"/>
    <property type="match status" value="1"/>
</dbReference>
<dbReference type="PROSITE" id="PS50056">
    <property type="entry name" value="TYR_PHOSPHATASE_2"/>
    <property type="match status" value="2"/>
</dbReference>
<dbReference type="PROSITE" id="PS50055">
    <property type="entry name" value="TYR_PHOSPHATASE_PTP"/>
    <property type="match status" value="2"/>
</dbReference>
<accession>P23471</accession>
<accession>A4D0W5</accession>
<accession>C9JFM0</accession>
<accession>O76043</accession>
<accession>Q9UDR6</accession>
<name>PTPRZ_HUMAN</name>
<evidence type="ECO:0000250" key="1"/>
<evidence type="ECO:0000250" key="2">
    <source>
        <dbReference type="UniProtKB" id="B9EKR1"/>
    </source>
</evidence>
<evidence type="ECO:0000250" key="3">
    <source>
        <dbReference type="UniProtKB" id="Q62656"/>
    </source>
</evidence>
<evidence type="ECO:0000255" key="4"/>
<evidence type="ECO:0000255" key="5">
    <source>
        <dbReference type="PROSITE-ProRule" id="PRU00160"/>
    </source>
</evidence>
<evidence type="ECO:0000255" key="6">
    <source>
        <dbReference type="PROSITE-ProRule" id="PRU00316"/>
    </source>
</evidence>
<evidence type="ECO:0000255" key="7">
    <source>
        <dbReference type="PROSITE-ProRule" id="PRU01134"/>
    </source>
</evidence>
<evidence type="ECO:0000255" key="8">
    <source>
        <dbReference type="PROSITE-ProRule" id="PRU10044"/>
    </source>
</evidence>
<evidence type="ECO:0000256" key="9">
    <source>
        <dbReference type="SAM" id="MobiDB-lite"/>
    </source>
</evidence>
<evidence type="ECO:0000269" key="10">
    <source>
    </source>
</evidence>
<evidence type="ECO:0000269" key="11">
    <source>
    </source>
</evidence>
<evidence type="ECO:0000269" key="12">
    <source>
    </source>
</evidence>
<evidence type="ECO:0000269" key="13">
    <source>
    </source>
</evidence>
<evidence type="ECO:0000269" key="14">
    <source>
    </source>
</evidence>
<evidence type="ECO:0000269" key="15">
    <source>
    </source>
</evidence>
<evidence type="ECO:0000269" key="16">
    <source ref="5"/>
</evidence>
<evidence type="ECO:0000303" key="17">
    <source>
    </source>
</evidence>
<evidence type="ECO:0000305" key="18"/>
<evidence type="ECO:0007744" key="19">
    <source>
    </source>
</evidence>
<evidence type="ECO:0007829" key="20">
    <source>
        <dbReference type="PDB" id="3JXF"/>
    </source>
</evidence>
<evidence type="ECO:0007829" key="21">
    <source>
        <dbReference type="PDB" id="5AWX"/>
    </source>
</evidence>
<evidence type="ECO:0007829" key="22">
    <source>
        <dbReference type="PDB" id="8FN8"/>
    </source>
</evidence>
<evidence type="ECO:0007829" key="23">
    <source>
        <dbReference type="PDB" id="8FN9"/>
    </source>
</evidence>
<sequence length="2315" mass="254587">MRILKRFLACIQLLCVCRLDWANGYYRQQRKLVEEIGWSYTGALNQKNWGKKYPTCNSPKQSPINIDEDLTQVNVNLKKLKFQGWDKTSLENTFIHNTGKTVEINLTNDYRVSGGVSEMVFKASKITFHWGKCNMSSDGSEHSLEGQKFPLEMQIYCFDADRFSSFEEAVKGKGKLRALSILFEVGTEENLDFKAIIDGVESVSRFGKQAALDPFILLNLLPNSTDKYYIYNGSLTSPPCTDTVDWIVFKDTVSISESQLAVFCEVLTMQQSGYVMLMDYLQNNFREQQYKFSRQVFSSYTGKEEIHEAVCSSEPENVQADPENYTSLLVTWERPRVVYDTMIEKFAVLYQQLDGEDQTKHEFLTDGYQDLGAILNNLLPNMSYVLQIVAICTNGLYGKYSDQLIVDMPTDNPELDLFPELIGTEEIIKEEEEGKDIEEGAIVNPGRDSATNQIRKKEPQISTTTHYNRIGTKYNEAKTNRSPTRGSEFSGKGDVPNTSLNSTSQPVTKLATEKDISLTSQTVTELPPHTVEGTSASLNDGSKTVLRSPHMNLSGTAESLNTVSITEYEEESLLTSFKLDTGAEDSSGSSPATSAIPFISENISQGYIFSSENPETITYDVLIPESARNASEDSTSSGSEESLKDPSMEGNVWFPSSTDITAQPDVGSGRESFLQTNYTEIRVDESEKTTKSFSAGPVMSQGPSVTDLEMPHYSTFAYFPTEVTPHAFTPSSRQQDLVSTVNVVYSQTTQPVYNGETPLQPSYSSEVFPLVTPLLLDNQILNTTPAASSSDSALHATPVFPSVDVSFESILSSYDGAPLLPFSSASFSSELFRHLHTVSQILPQVTSATESDKVPLHASLPVAGGDLLLEPSLAQYSDVLSTTHAASETLEFGSESGVLYKTLMFSQVEPPSSDAMMHARSSGPEPSYALSDNEGSQHIFTVSYSSAIPVHDSVGVTYQGSLFSGPSHIPIPKSSLITPTASLLQPTHALSGDGEWSGASSDSEFLLPDTDGLTALNISSPVSVAEFTYTTSVFGDDNKALSKSEIIYGNETELQIPSFNEMVYPSESTVMPNMYDNVNKLNASLQETSVSISSTKGMFPGSLAHTTTKVFDHEISQVPENNFSVQPTHTVSQASGDTSLKPVLSANSEPASSDPASSEMLSPSTQLLFYETSASFSTEVLLQPSFQASDVDTLLKTVLPAVPSDPILVETPKVDKISSTMLHLIVSNSASSENMLHSTSVPVFDVSPTSHMHSASLQGLTISYASEKYEPVLLKSESSHQVVPSLYSNDELFQTANLEINQAHPPKGRHVFATPVLSIDEPLNTLINKLIHSDEILTSTKSSVTGKVFAGIPTVASDTFVSTDHSVPIGNGHVAITAVSPHRDGSVTSTKLLFPSKATSELSHSAKSDAGLVGGGEDGDTDDDGDDDDDDRGSDGLSIHKCMSCSSYRESQEKVMNDSDTHENSLMDQNNPISYSLSENSEEDNRVTSVSSDSQTGMDRSPGKSPSANGLSQKHNDGKEENDIQTGSALLPLSPESKAWAVLTSDEESGSGQGTSDSLNENETSTDFSFADTNEKDADGILAAGDSEITPGFPQSPTSSVTSENSEVFHVSEAEASNSSHESRIGLAEGLESEKKAVIPLVIVSALTFICLVVLVGILIYWRKCFQTAHFYLEDSTSPRVISTPPTPIFPISDDVGAIPIKHFPKHVADLHASSGFTEEFETLKEFYQEVQSCTVDLGITADSSNHPDNKHKNRYINIVAYDHSRVKLAQLAEKDGKLTDYINANYVDGYNRPKAYIAAQGPLKSTAEDFWRMIWEHNVEVIVMITNLVEKGRRKCDQYWPADGSEEYGNFLVTQKSVQVLAYYTVRNFTLRNTKIKKGSQKGRPSGRVVTQYHYTQWPDMGVPEYSLPVLTFVRKAAYAKRHAVGPVVVHCSAGVGRTGTYIVLDSMLQQIQHEGTVNIFGFLKHIRSQRNYLVQTEEQYVFIHDTLVEAILSKETEVLDSHIHAYVNALLIPGPAGKTKLEKQFQLLSQSNIQQSDYSAALKQCNREKNRTSSIIPVERSRVGISSLSGEGTDYINASYIMGYYQSNEFIITQHPLLHTIKDFWRMIWDHNAQLVVMIPDGQNMAEDEFVYWPNKDEPINCESFKVTLMAEEHKCLSNEEKLIIQDFILEATQDDYVLEVRHFQCPKWPNPDSPISKTFELISVIKEEAANRDGPMIVHDEHGGVTAGTFCALTTLMHQLEKENSVDVYQVAKMINLMRPGVFADIEQYQFLYKVILSLVSTRQEENPSTSLDSNGAALPDGNIAESLESLV</sequence>
<gene>
    <name type="primary">PTPRZ1</name>
    <name type="synonym">HTPZP2</name>
    <name type="synonym">PTPRZ</name>
    <name type="synonym">PTPRZ2</name>
    <name type="synonym">PTPZ</name>
</gene>
<keyword id="KW-0002">3D-structure</keyword>
<keyword id="KW-0025">Alternative splicing</keyword>
<keyword id="KW-1003">Cell membrane</keyword>
<keyword id="KW-1015">Disulfide bond</keyword>
<keyword id="KW-0325">Glycoprotein</keyword>
<keyword id="KW-0378">Hydrolase</keyword>
<keyword id="KW-0472">Membrane</keyword>
<keyword id="KW-0597">Phosphoprotein</keyword>
<keyword id="KW-0904">Protein phosphatase</keyword>
<keyword id="KW-0654">Proteoglycan</keyword>
<keyword id="KW-1267">Proteomics identification</keyword>
<keyword id="KW-1185">Reference proteome</keyword>
<keyword id="KW-0677">Repeat</keyword>
<keyword id="KW-0964">Secreted</keyword>
<keyword id="KW-0732">Signal</keyword>
<keyword id="KW-0812">Transmembrane</keyword>
<keyword id="KW-1133">Transmembrane helix</keyword>
<protein>
    <recommendedName>
        <fullName>Receptor-type tyrosine-protein phosphatase zeta</fullName>
        <shortName>R-PTP-zeta</shortName>
        <ecNumber evidence="3">3.1.3.48</ecNumber>
    </recommendedName>
    <alternativeName>
        <fullName>Protein-tyrosine phosphatase receptor type Z polypeptide 1</fullName>
    </alternativeName>
    <alternativeName>
        <fullName>Protein-tyrosine phosphatase receptor type Z polypeptide 2</fullName>
    </alternativeName>
    <alternativeName>
        <fullName>R-PTP-zeta-2</fullName>
    </alternativeName>
</protein>
<proteinExistence type="evidence at protein level"/>
<reference key="1">
    <citation type="journal article" date="1992" name="Proc. Natl. Acad. Sci. U.S.A.">
        <title>A human transmembrane protein-tyrosine-phosphatase, PTP zeta, is expressed in brain and has an N-terminal receptor domain homologous to carbonic anhydrases.</title>
        <authorList>
            <person name="Krueger N.X."/>
            <person name="Saito H."/>
        </authorList>
    </citation>
    <scope>NUCLEOTIDE SEQUENCE [MRNA] (ISOFORM 1)</scope>
    <scope>VARIANT ASP-1433</scope>
    <source>
        <tissue>Brain</tissue>
    </source>
</reference>
<reference key="2">
    <citation type="journal article" date="1993" name="J. Biol. Chem.">
        <title>The cloning of a receptor-type protein tyrosine phosphatase expressed in the central nervous system.</title>
        <authorList>
            <person name="Levy J.B."/>
            <person name="Canoll P.D."/>
            <person name="Silvennoinen O."/>
            <person name="Barnea G."/>
            <person name="Morse B."/>
            <person name="Honegger A.M."/>
            <person name="Huang J.-T."/>
            <person name="Cannizzaro L.A."/>
            <person name="Park S.-H."/>
            <person name="Druck T."/>
            <person name="Huebner K."/>
            <person name="Sap J."/>
            <person name="Ehrlich M."/>
            <person name="Musacchio J.M."/>
            <person name="Schlessinger J."/>
        </authorList>
    </citation>
    <scope>NUCLEOTIDE SEQUENCE [MRNA] (ISOFORMS 2 AND 3)</scope>
    <source>
        <tissue>Brain stem</tissue>
    </source>
</reference>
<reference key="3">
    <citation type="journal article" date="2003" name="Nature">
        <title>The DNA sequence of human chromosome 7.</title>
        <authorList>
            <person name="Hillier L.W."/>
            <person name="Fulton R.S."/>
            <person name="Fulton L.A."/>
            <person name="Graves T.A."/>
            <person name="Pepin K.H."/>
            <person name="Wagner-McPherson C."/>
            <person name="Layman D."/>
            <person name="Maas J."/>
            <person name="Jaeger S."/>
            <person name="Walker R."/>
            <person name="Wylie K."/>
            <person name="Sekhon M."/>
            <person name="Becker M.C."/>
            <person name="O'Laughlin M.D."/>
            <person name="Schaller M.E."/>
            <person name="Fewell G.A."/>
            <person name="Delehaunty K.D."/>
            <person name="Miner T.L."/>
            <person name="Nash W.E."/>
            <person name="Cordes M."/>
            <person name="Du H."/>
            <person name="Sun H."/>
            <person name="Edwards J."/>
            <person name="Bradshaw-Cordum H."/>
            <person name="Ali J."/>
            <person name="Andrews S."/>
            <person name="Isak A."/>
            <person name="Vanbrunt A."/>
            <person name="Nguyen C."/>
            <person name="Du F."/>
            <person name="Lamar B."/>
            <person name="Courtney L."/>
            <person name="Kalicki J."/>
            <person name="Ozersky P."/>
            <person name="Bielicki L."/>
            <person name="Scott K."/>
            <person name="Holmes A."/>
            <person name="Harkins R."/>
            <person name="Harris A."/>
            <person name="Strong C.M."/>
            <person name="Hou S."/>
            <person name="Tomlinson C."/>
            <person name="Dauphin-Kohlberg S."/>
            <person name="Kozlowicz-Reilly A."/>
            <person name="Leonard S."/>
            <person name="Rohlfing T."/>
            <person name="Rock S.M."/>
            <person name="Tin-Wollam A.-M."/>
            <person name="Abbott A."/>
            <person name="Minx P."/>
            <person name="Maupin R."/>
            <person name="Strowmatt C."/>
            <person name="Latreille P."/>
            <person name="Miller N."/>
            <person name="Johnson D."/>
            <person name="Murray J."/>
            <person name="Woessner J.P."/>
            <person name="Wendl M.C."/>
            <person name="Yang S.-P."/>
            <person name="Schultz B.R."/>
            <person name="Wallis J.W."/>
            <person name="Spieth J."/>
            <person name="Bieri T.A."/>
            <person name="Nelson J.O."/>
            <person name="Berkowicz N."/>
            <person name="Wohldmann P.E."/>
            <person name="Cook L.L."/>
            <person name="Hickenbotham M.T."/>
            <person name="Eldred J."/>
            <person name="Williams D."/>
            <person name="Bedell J.A."/>
            <person name="Mardis E.R."/>
            <person name="Clifton S.W."/>
            <person name="Chissoe S.L."/>
            <person name="Marra M.A."/>
            <person name="Raymond C."/>
            <person name="Haugen E."/>
            <person name="Gillett W."/>
            <person name="Zhou Y."/>
            <person name="James R."/>
            <person name="Phelps K."/>
            <person name="Iadanoto S."/>
            <person name="Bubb K."/>
            <person name="Simms E."/>
            <person name="Levy R."/>
            <person name="Clendenning J."/>
            <person name="Kaul R."/>
            <person name="Kent W.J."/>
            <person name="Furey T.S."/>
            <person name="Baertsch R.A."/>
            <person name="Brent M.R."/>
            <person name="Keibler E."/>
            <person name="Flicek P."/>
            <person name="Bork P."/>
            <person name="Suyama M."/>
            <person name="Bailey J.A."/>
            <person name="Portnoy M.E."/>
            <person name="Torrents D."/>
            <person name="Chinwalla A.T."/>
            <person name="Gish W.R."/>
            <person name="Eddy S.R."/>
            <person name="McPherson J.D."/>
            <person name="Olson M.V."/>
            <person name="Eichler E.E."/>
            <person name="Green E.D."/>
            <person name="Waterston R.H."/>
            <person name="Wilson R.K."/>
        </authorList>
    </citation>
    <scope>NUCLEOTIDE SEQUENCE [LARGE SCALE GENOMIC DNA]</scope>
</reference>
<reference key="4">
    <citation type="journal article" date="2003" name="Science">
        <title>Human chromosome 7: DNA sequence and biology.</title>
        <authorList>
            <person name="Scherer S.W."/>
            <person name="Cheung J."/>
            <person name="MacDonald J.R."/>
            <person name="Osborne L.R."/>
            <person name="Nakabayashi K."/>
            <person name="Herbrick J.-A."/>
            <person name="Carson A.R."/>
            <person name="Parker-Katiraee L."/>
            <person name="Skaug J."/>
            <person name="Khaja R."/>
            <person name="Zhang J."/>
            <person name="Hudek A.K."/>
            <person name="Li M."/>
            <person name="Haddad M."/>
            <person name="Duggan G.E."/>
            <person name="Fernandez B.A."/>
            <person name="Kanematsu E."/>
            <person name="Gentles S."/>
            <person name="Christopoulos C.C."/>
            <person name="Choufani S."/>
            <person name="Kwasnicka D."/>
            <person name="Zheng X.H."/>
            <person name="Lai Z."/>
            <person name="Nusskern D.R."/>
            <person name="Zhang Q."/>
            <person name="Gu Z."/>
            <person name="Lu F."/>
            <person name="Zeesman S."/>
            <person name="Nowaczyk M.J."/>
            <person name="Teshima I."/>
            <person name="Chitayat D."/>
            <person name="Shuman C."/>
            <person name="Weksberg R."/>
            <person name="Zackai E.H."/>
            <person name="Grebe T.A."/>
            <person name="Cox S.R."/>
            <person name="Kirkpatrick S.J."/>
            <person name="Rahman N."/>
            <person name="Friedman J.M."/>
            <person name="Heng H.H.Q."/>
            <person name="Pelicci P.G."/>
            <person name="Lo-Coco F."/>
            <person name="Belloni E."/>
            <person name="Shaffer L.G."/>
            <person name="Pober B."/>
            <person name="Morton C.C."/>
            <person name="Gusella J.F."/>
            <person name="Bruns G.A.P."/>
            <person name="Korf B.R."/>
            <person name="Quade B.J."/>
            <person name="Ligon A.H."/>
            <person name="Ferguson H."/>
            <person name="Higgins A.W."/>
            <person name="Leach N.T."/>
            <person name="Herrick S.R."/>
            <person name="Lemyre E."/>
            <person name="Farra C.G."/>
            <person name="Kim H.-G."/>
            <person name="Summers A.M."/>
            <person name="Gripp K.W."/>
            <person name="Roberts W."/>
            <person name="Szatmari P."/>
            <person name="Winsor E.J.T."/>
            <person name="Grzeschik K.-H."/>
            <person name="Teebi A."/>
            <person name="Minassian B.A."/>
            <person name="Kere J."/>
            <person name="Armengol L."/>
            <person name="Pujana M.A."/>
            <person name="Estivill X."/>
            <person name="Wilson M.D."/>
            <person name="Koop B.F."/>
            <person name="Tosi S."/>
            <person name="Moore G.E."/>
            <person name="Boright A.P."/>
            <person name="Zlotorynski E."/>
            <person name="Kerem B."/>
            <person name="Kroisel P.M."/>
            <person name="Petek E."/>
            <person name="Oscier D.G."/>
            <person name="Mould S.J."/>
            <person name="Doehner H."/>
            <person name="Doehner K."/>
            <person name="Rommens J.M."/>
            <person name="Vincent J.B."/>
            <person name="Venter J.C."/>
            <person name="Li P.W."/>
            <person name="Mural R.J."/>
            <person name="Adams M.D."/>
            <person name="Tsui L.-C."/>
        </authorList>
    </citation>
    <scope>NUCLEOTIDE SEQUENCE [LARGE SCALE GENOMIC DNA]</scope>
    <scope>VARIANT ASP-1433</scope>
</reference>
<reference key="5">
    <citation type="submission" date="2005-07" db="EMBL/GenBank/DDBJ databases">
        <authorList>
            <person name="Mural R.J."/>
            <person name="Istrail S."/>
            <person name="Sutton G.G."/>
            <person name="Florea L."/>
            <person name="Halpern A.L."/>
            <person name="Mobarry C.M."/>
            <person name="Lippert R."/>
            <person name="Walenz B."/>
            <person name="Shatkay H."/>
            <person name="Dew I."/>
            <person name="Miller J.R."/>
            <person name="Flanigan M.J."/>
            <person name="Edwards N.J."/>
            <person name="Bolanos R."/>
            <person name="Fasulo D."/>
            <person name="Halldorsson B.V."/>
            <person name="Hannenhalli S."/>
            <person name="Turner R."/>
            <person name="Yooseph S."/>
            <person name="Lu F."/>
            <person name="Nusskern D.R."/>
            <person name="Shue B.C."/>
            <person name="Zheng X.H."/>
            <person name="Zhong F."/>
            <person name="Delcher A.L."/>
            <person name="Huson D.H."/>
            <person name="Kravitz S.A."/>
            <person name="Mouchard L."/>
            <person name="Reinert K."/>
            <person name="Remington K.A."/>
            <person name="Clark A.G."/>
            <person name="Waterman M.S."/>
            <person name="Eichler E.E."/>
            <person name="Adams M.D."/>
            <person name="Hunkapiller M.W."/>
            <person name="Myers E.W."/>
            <person name="Venter J.C."/>
        </authorList>
    </citation>
    <scope>NUCLEOTIDE SEQUENCE [LARGE SCALE GENOMIC DNA]</scope>
    <scope>VARIANT ASP-1433</scope>
</reference>
<reference key="6">
    <citation type="journal article" date="1998" name="Genomics">
        <title>Molecular cloning and expression analysis of five novel genes in chromosome 1p36.</title>
        <authorList>
            <person name="Onyango P."/>
            <person name="Lubyova B."/>
            <person name="Gardellin P."/>
            <person name="Kurzbauer R."/>
            <person name="Weith A."/>
        </authorList>
    </citation>
    <scope>NUCLEOTIDE SEQUENCE [MRNA] OF 1-999 (ISOFORM 1)</scope>
    <scope>TISSUE SPECIFICITY</scope>
</reference>
<reference key="7">
    <citation type="journal article" date="1990" name="EMBO J.">
        <title>Structural diversity and evolution of human receptor-like protein tyrosine phosphatases.</title>
        <authorList>
            <person name="Krueger N.X."/>
            <person name="Streuli M."/>
            <person name="Saito H."/>
        </authorList>
    </citation>
    <scope>NUCLEOTIDE SEQUENCE [MRNA] OF 1480-2092 (ISOFORM 1)</scope>
    <source>
        <tissue>Liver</tissue>
    </source>
</reference>
<reference key="8">
    <citation type="journal article" date="1990" name="Proc. Natl. Acad. Sci. U.S.A.">
        <title>Cloning of three human tyrosine phosphatases reveals a multigene family of receptor-linked protein-tyrosine-phosphatases expressed in brain.</title>
        <authorList>
            <person name="Kaplan R."/>
            <person name="Morse B."/>
            <person name="Huebner K."/>
            <person name="Croce C."/>
            <person name="Howk R."/>
            <person name="Ravera M."/>
            <person name="Ricca G."/>
            <person name="Jaye M."/>
            <person name="Schlessinger J."/>
        </authorList>
    </citation>
    <scope>NUCLEOTIDE SEQUENCE [MRNA] OF 1750-1991 AND 2048-2281 (ISOFORM 1)</scope>
    <source>
        <tissue>Brain stem</tissue>
    </source>
</reference>
<reference key="9">
    <citation type="journal article" date="2005" name="J. Proteome Res.">
        <title>Human plasma N-glycoproteome analysis by immunoaffinity subtraction, hydrazide chemistry, and mass spectrometry.</title>
        <authorList>
            <person name="Liu T."/>
            <person name="Qian W.-J."/>
            <person name="Gritsenko M.A."/>
            <person name="Camp D.G. II"/>
            <person name="Monroe M.E."/>
            <person name="Moore R.J."/>
            <person name="Smith R.D."/>
        </authorList>
    </citation>
    <scope>GLYCOSYLATION [LARGE SCALE ANALYSIS] AT ASN-105</scope>
    <source>
        <tissue>Plasma</tissue>
    </source>
</reference>
<reference key="10">
    <citation type="journal article" date="2006" name="FEBS Lett.">
        <title>Protein tyrosine phosphatase receptor type Z is inactivated by ligand-induced oligomerization.</title>
        <authorList>
            <person name="Fukada M."/>
            <person name="Fujikawa A."/>
            <person name="Chow J.P."/>
            <person name="Ikematsu S."/>
            <person name="Sakuma S."/>
            <person name="Noda M."/>
        </authorList>
    </citation>
    <scope>INTERACTION WITH PTN</scope>
</reference>
<reference key="11">
    <citation type="journal article" date="2011" name="Sci. Signal.">
        <title>System-wide temporal characterization of the proteome and phosphoproteome of human embryonic stem cell differentiation.</title>
        <authorList>
            <person name="Rigbolt K.T."/>
            <person name="Prokhorova T.A."/>
            <person name="Akimov V."/>
            <person name="Henningsen J."/>
            <person name="Johansen P.T."/>
            <person name="Kratchmarova I."/>
            <person name="Kassem M."/>
            <person name="Mann M."/>
            <person name="Olsen J.V."/>
            <person name="Blagoev B."/>
        </authorList>
    </citation>
    <scope>PHOSPHORYLATION [LARGE SCALE ANALYSIS] AT SER-2055</scope>
    <scope>IDENTIFICATION BY MASS SPECTROMETRY [LARGE SCALE ANALYSIS]</scope>
</reference>
<reference key="12">
    <citation type="journal article" date="2010" name="Proc. Natl. Acad. Sci. U.S.A.">
        <title>The protein tyrosine phosphatases PTPRZ and PTPRG bind to distinct members of the contactin family of neural recognition molecules.</title>
        <authorList>
            <person name="Bouyain S."/>
            <person name="Watkins D.J."/>
        </authorList>
    </citation>
    <scope>X-RAY CRYSTALLOGRAPHY (2.0 ANGSTROMS) OF 34-302</scope>
    <scope>INTERACTION WITH CNTN1</scope>
    <scope>DISULFIDE BONDS</scope>
</reference>
<feature type="signal peptide" evidence="1">
    <location>
        <begin position="1"/>
        <end position="24"/>
    </location>
</feature>
<feature type="chain" id="PRO_0000025468" description="Receptor-type tyrosine-protein phosphatase zeta">
    <location>
        <begin position="25"/>
        <end position="2315"/>
    </location>
</feature>
<feature type="topological domain" description="Extracellular" evidence="4">
    <location>
        <begin position="25"/>
        <end position="1636"/>
    </location>
</feature>
<feature type="transmembrane region" description="Helical" evidence="4">
    <location>
        <begin position="1637"/>
        <end position="1662"/>
    </location>
</feature>
<feature type="topological domain" description="Cytoplasmic" evidence="4">
    <location>
        <begin position="1663"/>
        <end position="2315"/>
    </location>
</feature>
<feature type="domain" description="Alpha-carbonic anhydrase" evidence="7">
    <location>
        <begin position="36"/>
        <end position="300"/>
    </location>
</feature>
<feature type="domain" description="Fibronectin type-III" evidence="6">
    <location>
        <begin position="314"/>
        <end position="413"/>
    </location>
</feature>
<feature type="domain" description="Tyrosine-protein phosphatase 1" evidence="5">
    <location>
        <begin position="1717"/>
        <end position="1992"/>
    </location>
</feature>
<feature type="domain" description="Tyrosine-protein phosphatase 2" evidence="5">
    <location>
        <begin position="2023"/>
        <end position="2282"/>
    </location>
</feature>
<feature type="region of interest" description="Disordered" evidence="9">
    <location>
        <begin position="442"/>
        <end position="462"/>
    </location>
</feature>
<feature type="region of interest" description="Disordered" evidence="9">
    <location>
        <begin position="477"/>
        <end position="507"/>
    </location>
</feature>
<feature type="region of interest" description="Disordered" evidence="9">
    <location>
        <begin position="628"/>
        <end position="650"/>
    </location>
</feature>
<feature type="region of interest" description="Disordered" evidence="9">
    <location>
        <begin position="1123"/>
        <end position="1160"/>
    </location>
</feature>
<feature type="region of interest" description="Disordered" evidence="9">
    <location>
        <begin position="1397"/>
        <end position="1523"/>
    </location>
</feature>
<feature type="region of interest" description="Disordered" evidence="9">
    <location>
        <begin position="1543"/>
        <end position="1572"/>
    </location>
</feature>
<feature type="region of interest" description="Disordered" evidence="9">
    <location>
        <begin position="1584"/>
        <end position="1621"/>
    </location>
</feature>
<feature type="compositionally biased region" description="Polar residues" evidence="9">
    <location>
        <begin position="496"/>
        <end position="507"/>
    </location>
</feature>
<feature type="compositionally biased region" description="Polar residues" evidence="9">
    <location>
        <begin position="1123"/>
        <end position="1138"/>
    </location>
</feature>
<feature type="compositionally biased region" description="Low complexity" evidence="9">
    <location>
        <begin position="1145"/>
        <end position="1159"/>
    </location>
</feature>
<feature type="compositionally biased region" description="Acidic residues" evidence="9">
    <location>
        <begin position="1417"/>
        <end position="1432"/>
    </location>
</feature>
<feature type="compositionally biased region" description="Basic and acidic residues" evidence="9">
    <location>
        <begin position="1450"/>
        <end position="1465"/>
    </location>
</feature>
<feature type="compositionally biased region" description="Polar residues" evidence="9">
    <location>
        <begin position="1466"/>
        <end position="1479"/>
    </location>
</feature>
<feature type="compositionally biased region" description="Polar residues" evidence="9">
    <location>
        <begin position="1487"/>
        <end position="1513"/>
    </location>
</feature>
<feature type="compositionally biased region" description="Polar residues" evidence="9">
    <location>
        <begin position="1554"/>
        <end position="1572"/>
    </location>
</feature>
<feature type="compositionally biased region" description="Polar residues" evidence="9">
    <location>
        <begin position="1593"/>
        <end position="1606"/>
    </location>
</feature>
<feature type="active site" description="Phosphocysteine intermediate" evidence="5 8">
    <location>
        <position position="1933"/>
    </location>
</feature>
<feature type="binding site" evidence="1">
    <location>
        <position position="1901"/>
    </location>
    <ligand>
        <name>substrate</name>
    </ligand>
</feature>
<feature type="binding site" evidence="1">
    <location>
        <begin position="1933"/>
        <end position="1939"/>
    </location>
    <ligand>
        <name>substrate</name>
    </ligand>
</feature>
<feature type="binding site" evidence="1">
    <location>
        <position position="1977"/>
    </location>
    <ligand>
        <name>substrate</name>
    </ligand>
</feature>
<feature type="site" description="Ancestral active site">
    <location>
        <position position="2223"/>
    </location>
</feature>
<feature type="modified residue" description="Phosphoserine; alternate" evidence="3">
    <location>
        <position position="637"/>
    </location>
</feature>
<feature type="modified residue" description="Phosphoserine" evidence="3">
    <location>
        <position position="639"/>
    </location>
</feature>
<feature type="modified residue" description="Phosphothreonine" evidence="2">
    <location>
        <position position="1684"/>
    </location>
</feature>
<feature type="modified residue" description="Phosphothreonine" evidence="3">
    <location>
        <position position="1687"/>
    </location>
</feature>
<feature type="modified residue" description="Phosphoserine" evidence="19">
    <location>
        <position position="2055"/>
    </location>
</feature>
<feature type="glycosylation site" description="N-linked (GlcNAc...) asparagine" evidence="12">
    <location>
        <position position="105"/>
    </location>
</feature>
<feature type="glycosylation site" description="N-linked (GlcNAc...) asparagine" evidence="4">
    <location>
        <position position="134"/>
    </location>
</feature>
<feature type="glycosylation site" description="N-linked (GlcNAc...) asparagine" evidence="4">
    <location>
        <position position="223"/>
    </location>
</feature>
<feature type="glycosylation site" description="N-linked (GlcNAc...) asparagine" evidence="4">
    <location>
        <position position="232"/>
    </location>
</feature>
<feature type="glycosylation site" description="N-linked (GlcNAc...) asparagine" evidence="4">
    <location>
        <position position="324"/>
    </location>
</feature>
<feature type="glycosylation site" description="N-linked (GlcNAc...) asparagine" evidence="4">
    <location>
        <position position="381"/>
    </location>
</feature>
<feature type="glycosylation site" description="N-linked (GlcNAc...) asparagine" evidence="4">
    <location>
        <position position="497"/>
    </location>
</feature>
<feature type="glycosylation site" description="N-linked (GlcNAc...) asparagine" evidence="4">
    <location>
        <position position="501"/>
    </location>
</feature>
<feature type="glycosylation site" description="N-linked (GlcNAc...) asparagine" evidence="4">
    <location>
        <position position="552"/>
    </location>
</feature>
<feature type="glycosylation site" description="O-linked (Xyl...) (chondroitin sulfate) serine" evidence="4">
    <location>
        <position position="587"/>
    </location>
</feature>
<feature type="glycosylation site" description="N-linked (GlcNAc...) asparagine" evidence="4">
    <location>
        <position position="602"/>
    </location>
</feature>
<feature type="glycosylation site" description="N-linked (GlcNAc...) asparagine" evidence="4">
    <location>
        <position position="629"/>
    </location>
</feature>
<feature type="glycosylation site" description="O-linked (Xyl...) (chondroitin sulfate) serine; alternate" evidence="4">
    <location>
        <position position="637"/>
    </location>
</feature>
<feature type="glycosylation site" description="N-linked (GlcNAc...) asparagine" evidence="4">
    <location>
        <position position="677"/>
    </location>
</feature>
<feature type="glycosylation site" description="O-linked (Xyl...) (chondroitin sulfate) serine" evidence="4">
    <location>
        <position position="997"/>
    </location>
</feature>
<feature type="glycosylation site" description="N-linked (GlcNAc...) asparagine" evidence="4">
    <location>
        <position position="1017"/>
    </location>
</feature>
<feature type="glycosylation site" description="N-linked (GlcNAc...) asparagine" evidence="4">
    <location>
        <position position="1050"/>
    </location>
</feature>
<feature type="glycosylation site" description="N-linked (GlcNAc...) asparagine" evidence="4">
    <location>
        <position position="1082"/>
    </location>
</feature>
<feature type="glycosylation site" description="N-linked (GlcNAc...) asparagine" evidence="4">
    <location>
        <position position="1122"/>
    </location>
</feature>
<feature type="glycosylation site" description="N-linked (GlcNAc...) asparagine" evidence="4">
    <location>
        <position position="1457"/>
    </location>
</feature>
<feature type="glycosylation site" description="O-linked (Xyl...) (chondroitin sulfate) serine" evidence="4">
    <location>
        <position position="1549"/>
    </location>
</feature>
<feature type="glycosylation site" description="O-linked (Xyl...) (chondroitin sulfate) serine" evidence="4">
    <location>
        <position position="1551"/>
    </location>
</feature>
<feature type="glycosylation site" description="N-linked (GlcNAc...) asparagine" evidence="4">
    <location>
        <position position="1562"/>
    </location>
</feature>
<feature type="glycosylation site" description="N-linked (GlcNAc...) asparagine" evidence="4">
    <location>
        <position position="1618"/>
    </location>
</feature>
<feature type="disulfide bond" evidence="14">
    <location>
        <begin position="56"/>
        <end position="240"/>
    </location>
</feature>
<feature type="disulfide bond" evidence="14">
    <location>
        <begin position="133"/>
        <end position="264"/>
    </location>
</feature>
<feature type="splice variant" id="VSP_054061" description="In isoform 3." evidence="17">
    <location>
        <begin position="755"/>
        <end position="1614"/>
    </location>
</feature>
<feature type="splice variant" id="VSP_054062" description="In isoform 2 and isoform 3." evidence="17">
    <location>
        <begin position="1723"/>
        <end position="1729"/>
    </location>
</feature>
<feature type="sequence variant" id="VAR_038942" description="In dbSNP:rs740965.">
    <original>I</original>
    <variation>S</variation>
    <location>
        <position position="3"/>
    </location>
</feature>
<feature type="sequence variant" id="VAR_038943" description="In dbSNP:rs11980387.">
    <original>R</original>
    <variation>L</variation>
    <location>
        <position position="6"/>
    </location>
</feature>
<feature type="sequence variant" id="VAR_038944" description="In dbSNP:rs1147504." evidence="10 11 16">
    <original>G</original>
    <variation>D</variation>
    <location>
        <position position="1433"/>
    </location>
</feature>
<feature type="sequence conflict" description="In Ref. 6; AAC39934." evidence="18" ref="6">
    <original>V</original>
    <variation>A</variation>
    <location>
        <position position="310"/>
    </location>
</feature>
<feature type="sequence conflict" description="In Ref. 6; AAC39934." evidence="18" ref="6">
    <original>S</original>
    <variation>R</variation>
    <location>
        <position position="312"/>
    </location>
</feature>
<feature type="sequence conflict" description="In Ref. 1; AAA60225, 2, 4; EAL24344 and 5; EAW83561." evidence="18" ref="1 2 4 5">
    <location>
        <position position="1426"/>
    </location>
</feature>
<feature type="strand" evidence="20">
    <location>
        <begin position="40"/>
        <end position="42"/>
    </location>
</feature>
<feature type="helix" evidence="20">
    <location>
        <begin position="46"/>
        <end position="48"/>
    </location>
</feature>
<feature type="helix" evidence="20">
    <location>
        <begin position="49"/>
        <end position="52"/>
    </location>
</feature>
<feature type="helix" evidence="20">
    <location>
        <begin position="54"/>
        <end position="57"/>
    </location>
</feature>
<feature type="strand" evidence="20">
    <location>
        <begin position="58"/>
        <end position="60"/>
    </location>
</feature>
<feature type="helix" evidence="20">
    <location>
        <begin position="68"/>
        <end position="70"/>
    </location>
</feature>
<feature type="strand" evidence="20">
    <location>
        <begin position="71"/>
        <end position="73"/>
    </location>
</feature>
<feature type="strand" evidence="20">
    <location>
        <begin position="78"/>
        <end position="84"/>
    </location>
</feature>
<feature type="strand" evidence="20">
    <location>
        <begin position="94"/>
        <end position="97"/>
    </location>
</feature>
<feature type="strand" evidence="20">
    <location>
        <begin position="102"/>
        <end position="105"/>
    </location>
</feature>
<feature type="strand" evidence="20">
    <location>
        <begin position="111"/>
        <end position="116"/>
    </location>
</feature>
<feature type="strand" evidence="20">
    <location>
        <begin position="121"/>
        <end position="134"/>
    </location>
</feature>
<feature type="strand" evidence="20">
    <location>
        <begin position="141"/>
        <end position="144"/>
    </location>
</feature>
<feature type="strand" evidence="20">
    <location>
        <begin position="150"/>
        <end position="158"/>
    </location>
</feature>
<feature type="turn" evidence="20">
    <location>
        <begin position="160"/>
        <end position="162"/>
    </location>
</feature>
<feature type="helix" evidence="20">
    <location>
        <begin position="166"/>
        <end position="171"/>
    </location>
</feature>
<feature type="strand" evidence="20">
    <location>
        <begin position="176"/>
        <end position="185"/>
    </location>
</feature>
<feature type="helix" evidence="20">
    <location>
        <begin position="191"/>
        <end position="193"/>
    </location>
</feature>
<feature type="helix" evidence="20">
    <location>
        <begin position="194"/>
        <end position="202"/>
    </location>
</feature>
<feature type="strand" evidence="20">
    <location>
        <begin position="209"/>
        <end position="211"/>
    </location>
</feature>
<feature type="helix" evidence="20">
    <location>
        <begin position="217"/>
        <end position="220"/>
    </location>
</feature>
<feature type="strand" evidence="20">
    <location>
        <begin position="226"/>
        <end position="233"/>
    </location>
</feature>
<feature type="strand" evidence="20">
    <location>
        <begin position="244"/>
        <end position="251"/>
    </location>
</feature>
<feature type="strand" evidence="20">
    <location>
        <begin position="253"/>
        <end position="255"/>
    </location>
</feature>
<feature type="helix" evidence="20">
    <location>
        <begin position="257"/>
        <end position="261"/>
    </location>
</feature>
<feature type="helix" evidence="20">
    <location>
        <begin position="262"/>
        <end position="265"/>
    </location>
</feature>
<feature type="strand" evidence="20">
    <location>
        <begin position="267"/>
        <end position="272"/>
    </location>
</feature>
<feature type="strand" evidence="20">
    <location>
        <begin position="275"/>
        <end position="280"/>
    </location>
</feature>
<feature type="strand" evidence="23">
    <location>
        <begin position="316"/>
        <end position="319"/>
    </location>
</feature>
<feature type="strand" evidence="23">
    <location>
        <begin position="322"/>
        <end position="326"/>
    </location>
</feature>
<feature type="strand" evidence="23">
    <location>
        <begin position="328"/>
        <end position="333"/>
    </location>
</feature>
<feature type="strand" evidence="23">
    <location>
        <begin position="343"/>
        <end position="356"/>
    </location>
</feature>
<feature type="strand" evidence="23">
    <location>
        <begin position="361"/>
        <end position="364"/>
    </location>
</feature>
<feature type="strand" evidence="23">
    <location>
        <begin position="366"/>
        <end position="369"/>
    </location>
</feature>
<feature type="strand" evidence="23">
    <location>
        <begin position="372"/>
        <end position="375"/>
    </location>
</feature>
<feature type="strand" evidence="23">
    <location>
        <begin position="384"/>
        <end position="392"/>
    </location>
</feature>
<feature type="strand" evidence="22">
    <location>
        <begin position="404"/>
        <end position="407"/>
    </location>
</feature>
<feature type="helix" evidence="21">
    <location>
        <begin position="1701"/>
        <end position="1703"/>
    </location>
</feature>
<feature type="helix" evidence="21">
    <location>
        <begin position="1704"/>
        <end position="1713"/>
    </location>
</feature>
<feature type="turn" evidence="21">
    <location>
        <begin position="1714"/>
        <end position="1716"/>
    </location>
</feature>
<feature type="helix" evidence="21">
    <location>
        <begin position="1717"/>
        <end position="1722"/>
    </location>
</feature>
<feature type="helix" evidence="21">
    <location>
        <begin position="1730"/>
        <end position="1733"/>
    </location>
</feature>
<feature type="turn" evidence="21">
    <location>
        <begin position="1734"/>
        <end position="1737"/>
    </location>
</feature>
<feature type="turn" evidence="21">
    <location>
        <begin position="1743"/>
        <end position="1746"/>
    </location>
</feature>
<feature type="helix" evidence="21">
    <location>
        <begin position="1748"/>
        <end position="1753"/>
    </location>
</feature>
<feature type="turn" evidence="21">
    <location>
        <begin position="1763"/>
        <end position="1765"/>
    </location>
</feature>
<feature type="strand" evidence="21">
    <location>
        <begin position="1766"/>
        <end position="1768"/>
    </location>
</feature>
<feature type="strand" evidence="21">
    <location>
        <begin position="1781"/>
        <end position="1790"/>
    </location>
</feature>
<feature type="strand" evidence="21">
    <location>
        <begin position="1793"/>
        <end position="1800"/>
    </location>
</feature>
<feature type="helix" evidence="21">
    <location>
        <begin position="1805"/>
        <end position="1807"/>
    </location>
</feature>
<feature type="helix" evidence="21">
    <location>
        <begin position="1808"/>
        <end position="1817"/>
    </location>
</feature>
<feature type="strand" evidence="21">
    <location>
        <begin position="1822"/>
        <end position="1825"/>
    </location>
</feature>
<feature type="strand" evidence="21">
    <location>
        <begin position="1829"/>
        <end position="1831"/>
    </location>
</feature>
<feature type="strand" evidence="21">
    <location>
        <begin position="1843"/>
        <end position="1849"/>
    </location>
</feature>
<feature type="strand" evidence="21">
    <location>
        <begin position="1852"/>
        <end position="1861"/>
    </location>
</feature>
<feature type="strand" evidence="21">
    <location>
        <begin position="1863"/>
        <end position="1874"/>
    </location>
</feature>
<feature type="strand" evidence="21">
    <location>
        <begin position="1889"/>
        <end position="1896"/>
    </location>
</feature>
<feature type="strand" evidence="21">
    <location>
        <begin position="1901"/>
        <end position="1903"/>
    </location>
</feature>
<feature type="helix" evidence="21">
    <location>
        <begin position="1908"/>
        <end position="1921"/>
    </location>
</feature>
<feature type="turn" evidence="21">
    <location>
        <begin position="1922"/>
        <end position="1924"/>
    </location>
</feature>
<feature type="strand" evidence="21">
    <location>
        <begin position="1929"/>
        <end position="1932"/>
    </location>
</feature>
<feature type="strand" evidence="21">
    <location>
        <begin position="1934"/>
        <end position="1937"/>
    </location>
</feature>
<feature type="helix" evidence="21">
    <location>
        <begin position="1938"/>
        <end position="1956"/>
    </location>
</feature>
<feature type="strand" evidence="21">
    <location>
        <begin position="1957"/>
        <end position="1959"/>
    </location>
</feature>
<feature type="helix" evidence="21">
    <location>
        <begin position="1961"/>
        <end position="1968"/>
    </location>
</feature>
<feature type="turn" evidence="21">
    <location>
        <begin position="1969"/>
        <end position="1971"/>
    </location>
</feature>
<feature type="helix" evidence="21">
    <location>
        <begin position="1979"/>
        <end position="1994"/>
    </location>
</feature>